<keyword id="KW-0093">Biotin biosynthesis</keyword>
<keyword id="KW-0663">Pyridoxal phosphate</keyword>
<keyword id="KW-1185">Reference proteome</keyword>
<keyword id="KW-0808">Transferase</keyword>
<protein>
    <recommendedName>
        <fullName>Putative 8-amino-7-oxononanoate synthase</fullName>
        <shortName>AONS</shortName>
        <ecNumber>2.3.1.47</ecNumber>
    </recommendedName>
    <alternativeName>
        <fullName>7-keto-8-amino-pelargonic acid synthase</fullName>
        <shortName>7-KAP synthase</shortName>
    </alternativeName>
    <alternativeName>
        <fullName>8-amino-7-ketopelargonate synthase</fullName>
    </alternativeName>
</protein>
<feature type="chain" id="PRO_0000381016" description="Putative 8-amino-7-oxononanoate synthase">
    <location>
        <begin position="1"/>
        <end position="395"/>
    </location>
</feature>
<feature type="binding site" evidence="1">
    <location>
        <position position="22"/>
    </location>
    <ligand>
        <name>substrate</name>
    </ligand>
</feature>
<feature type="binding site" evidence="1">
    <location>
        <begin position="109"/>
        <end position="110"/>
    </location>
    <ligand>
        <name>pyridoxal 5'-phosphate</name>
        <dbReference type="ChEBI" id="CHEBI:597326"/>
    </ligand>
</feature>
<feature type="binding site" evidence="1">
    <location>
        <position position="139"/>
    </location>
    <ligand>
        <name>substrate</name>
    </ligand>
</feature>
<feature type="binding site" evidence="1">
    <location>
        <position position="187"/>
    </location>
    <ligand>
        <name>pyridoxal 5'-phosphate</name>
        <dbReference type="ChEBI" id="CHEBI:597326"/>
    </ligand>
</feature>
<feature type="binding site" evidence="1">
    <location>
        <begin position="212"/>
        <end position="215"/>
    </location>
    <ligand>
        <name>pyridoxal 5'-phosphate</name>
        <dbReference type="ChEBI" id="CHEBI:597326"/>
    </ligand>
</feature>
<feature type="binding site" evidence="1">
    <location>
        <begin position="241"/>
        <end position="244"/>
    </location>
    <ligand>
        <name>pyridoxal 5'-phosphate</name>
        <dbReference type="ChEBI" id="CHEBI:597326"/>
    </ligand>
</feature>
<feature type="binding site" evidence="1">
    <location>
        <position position="358"/>
    </location>
    <ligand>
        <name>substrate</name>
    </ligand>
</feature>
<feature type="modified residue" description="N6-(pyridoxal phosphate)lysine" evidence="1">
    <location>
        <position position="244"/>
    </location>
</feature>
<name>BIOF_MAGMM</name>
<sequence>MEQPHLAYRAFCQSREAAGQWRQLHAVQPLPRGRVLRDGVELINFSSNNYMGLADHPLLKQRAMAWTEQWGTGAQASRLVCGDLEPFARIEARLVAGKGCEAALVLNAGYQANSSVIPALLDKRVLGGEPLVFSDRLNHASMHHGVQLAGVRQLRYRHGDLDHLERLLKRHAGEKVAKFILSETVFSMDGDRIDVGGLIALKQRYGAFLYLDEAHATGVLGPDGFGLAAAYPGQVDLVMGTFSKGLGGFGAYVTCSHALRAYLINRAGGFIYSTALPPGVLGAMDAALELLPQMGEVRARVLAGAQRVRAALRAAGLDTGNSSTPIIPVMVGDEQRTLALSEGLRAEGLLGIAIRPPTVPEGTSRLRLSLSAAHSDEDWSLLAAAVPRCLREING</sequence>
<evidence type="ECO:0000250" key="1"/>
<evidence type="ECO:0000305" key="2"/>
<proteinExistence type="inferred from homology"/>
<dbReference type="EC" id="2.3.1.47"/>
<dbReference type="EMBL" id="CP000471">
    <property type="protein sequence ID" value="ABK42560.1"/>
    <property type="molecule type" value="Genomic_DNA"/>
</dbReference>
<dbReference type="RefSeq" id="WP_011711734.1">
    <property type="nucleotide sequence ID" value="NC_008576.1"/>
</dbReference>
<dbReference type="SMR" id="A0L3L7"/>
<dbReference type="STRING" id="156889.Mmc1_0031"/>
<dbReference type="KEGG" id="mgm:Mmc1_0031"/>
<dbReference type="eggNOG" id="COG0156">
    <property type="taxonomic scope" value="Bacteria"/>
</dbReference>
<dbReference type="HOGENOM" id="CLU_015846_11_2_5"/>
<dbReference type="OrthoDB" id="9807157at2"/>
<dbReference type="UniPathway" id="UPA00078"/>
<dbReference type="Proteomes" id="UP000002586">
    <property type="component" value="Chromosome"/>
</dbReference>
<dbReference type="GO" id="GO:0008710">
    <property type="term" value="F:8-amino-7-oxononanoate synthase activity"/>
    <property type="evidence" value="ECO:0007669"/>
    <property type="project" value="UniProtKB-EC"/>
</dbReference>
<dbReference type="GO" id="GO:0030170">
    <property type="term" value="F:pyridoxal phosphate binding"/>
    <property type="evidence" value="ECO:0007669"/>
    <property type="project" value="InterPro"/>
</dbReference>
<dbReference type="GO" id="GO:0009102">
    <property type="term" value="P:biotin biosynthetic process"/>
    <property type="evidence" value="ECO:0007669"/>
    <property type="project" value="UniProtKB-UniPathway"/>
</dbReference>
<dbReference type="Gene3D" id="3.90.1150.10">
    <property type="entry name" value="Aspartate Aminotransferase, domain 1"/>
    <property type="match status" value="1"/>
</dbReference>
<dbReference type="Gene3D" id="3.40.640.10">
    <property type="entry name" value="Type I PLP-dependent aspartate aminotransferase-like (Major domain)"/>
    <property type="match status" value="1"/>
</dbReference>
<dbReference type="InterPro" id="IPR001917">
    <property type="entry name" value="Aminotrans_II_pyridoxalP_BS"/>
</dbReference>
<dbReference type="InterPro" id="IPR004839">
    <property type="entry name" value="Aminotransferase_I/II_large"/>
</dbReference>
<dbReference type="InterPro" id="IPR050087">
    <property type="entry name" value="AON_synthase_class-II"/>
</dbReference>
<dbReference type="InterPro" id="IPR004723">
    <property type="entry name" value="AONS_Archaea/Proteobacteria"/>
</dbReference>
<dbReference type="InterPro" id="IPR015424">
    <property type="entry name" value="PyrdxlP-dep_Trfase"/>
</dbReference>
<dbReference type="InterPro" id="IPR015421">
    <property type="entry name" value="PyrdxlP-dep_Trfase_major"/>
</dbReference>
<dbReference type="InterPro" id="IPR015422">
    <property type="entry name" value="PyrdxlP-dep_Trfase_small"/>
</dbReference>
<dbReference type="NCBIfam" id="TIGR00858">
    <property type="entry name" value="bioF"/>
    <property type="match status" value="1"/>
</dbReference>
<dbReference type="PANTHER" id="PTHR13693:SF100">
    <property type="entry name" value="8-AMINO-7-OXONONANOATE SYNTHASE"/>
    <property type="match status" value="1"/>
</dbReference>
<dbReference type="PANTHER" id="PTHR13693">
    <property type="entry name" value="CLASS II AMINOTRANSFERASE/8-AMINO-7-OXONONANOATE SYNTHASE"/>
    <property type="match status" value="1"/>
</dbReference>
<dbReference type="Pfam" id="PF00155">
    <property type="entry name" value="Aminotran_1_2"/>
    <property type="match status" value="1"/>
</dbReference>
<dbReference type="SUPFAM" id="SSF53383">
    <property type="entry name" value="PLP-dependent transferases"/>
    <property type="match status" value="1"/>
</dbReference>
<dbReference type="PROSITE" id="PS00599">
    <property type="entry name" value="AA_TRANSFER_CLASS_2"/>
    <property type="match status" value="1"/>
</dbReference>
<reference key="1">
    <citation type="journal article" date="2009" name="Appl. Environ. Microbiol.">
        <title>Complete genome sequence of the chemolithoautotrophic marine magnetotactic coccus strain MC-1.</title>
        <authorList>
            <person name="Schubbe S."/>
            <person name="Williams T.J."/>
            <person name="Xie G."/>
            <person name="Kiss H.E."/>
            <person name="Brettin T.S."/>
            <person name="Martinez D."/>
            <person name="Ross C.A."/>
            <person name="Schuler D."/>
            <person name="Cox B.L."/>
            <person name="Nealson K.H."/>
            <person name="Bazylinski D.A."/>
        </authorList>
    </citation>
    <scope>NUCLEOTIDE SEQUENCE [LARGE SCALE GENOMIC DNA]</scope>
    <source>
        <strain>ATCC BAA-1437 / JCM 17883 / MC-1</strain>
    </source>
</reference>
<accession>A0L3L7</accession>
<gene>
    <name type="primary">bioF</name>
    <name type="ordered locus">Mmc1_0031</name>
</gene>
<organism>
    <name type="scientific">Magnetococcus marinus (strain ATCC BAA-1437 / JCM 17883 / MC-1)</name>
    <dbReference type="NCBI Taxonomy" id="156889"/>
    <lineage>
        <taxon>Bacteria</taxon>
        <taxon>Pseudomonadati</taxon>
        <taxon>Pseudomonadota</taxon>
        <taxon>Alphaproteobacteria</taxon>
        <taxon>Magnetococcales</taxon>
        <taxon>Magnetococcaceae</taxon>
        <taxon>Magnetococcus</taxon>
    </lineage>
</organism>
<comment type="function">
    <text evidence="1">Catalyzes the decarboxylative condensation of pimeloyl-[acyl-carrier protein] and L-alanine to produce 8-amino-7-oxononanoate (AON), [acyl-carrier protein], and carbon dioxide.</text>
</comment>
<comment type="catalytic activity">
    <reaction>
        <text>6-carboxyhexanoyl-[ACP] + L-alanine + H(+) = (8S)-8-amino-7-oxononanoate + holo-[ACP] + CO2</text>
        <dbReference type="Rhea" id="RHEA:42288"/>
        <dbReference type="Rhea" id="RHEA-COMP:9685"/>
        <dbReference type="Rhea" id="RHEA-COMP:9955"/>
        <dbReference type="ChEBI" id="CHEBI:15378"/>
        <dbReference type="ChEBI" id="CHEBI:16526"/>
        <dbReference type="ChEBI" id="CHEBI:57972"/>
        <dbReference type="ChEBI" id="CHEBI:64479"/>
        <dbReference type="ChEBI" id="CHEBI:78846"/>
        <dbReference type="ChEBI" id="CHEBI:149468"/>
        <dbReference type="EC" id="2.3.1.47"/>
    </reaction>
</comment>
<comment type="cofactor">
    <cofactor evidence="1">
        <name>pyridoxal 5'-phosphate</name>
        <dbReference type="ChEBI" id="CHEBI:597326"/>
    </cofactor>
</comment>
<comment type="pathway">
    <text>Cofactor biosynthesis; biotin biosynthesis.</text>
</comment>
<comment type="subunit">
    <text evidence="1">Homodimer.</text>
</comment>
<comment type="similarity">
    <text evidence="2">Belongs to the class-II pyridoxal-phosphate-dependent aminotransferase family. BioF subfamily.</text>
</comment>